<gene>
    <name type="primary">ycf40</name>
</gene>
<feature type="chain" id="PRO_0000217358" description="Uncharacterized protein ycf40">
    <location>
        <begin position="1"/>
        <end position="73"/>
    </location>
</feature>
<comment type="subcellular location">
    <subcellularLocation>
        <location>Plastid</location>
        <location>Chloroplast</location>
    </subcellularLocation>
</comment>
<comment type="similarity">
    <text evidence="1">Belongs to the ycf40 family.</text>
</comment>
<accession>P49535</accession>
<keyword id="KW-0150">Chloroplast</keyword>
<keyword id="KW-0934">Plastid</keyword>
<organism>
    <name type="scientific">Trieres chinensis</name>
    <name type="common">Marine centric diatom</name>
    <name type="synonym">Odontella sinensis</name>
    <dbReference type="NCBI Taxonomy" id="1514140"/>
    <lineage>
        <taxon>Eukaryota</taxon>
        <taxon>Sar</taxon>
        <taxon>Stramenopiles</taxon>
        <taxon>Ochrophyta</taxon>
        <taxon>Bacillariophyta</taxon>
        <taxon>Mediophyceae</taxon>
        <taxon>Biddulphiophycidae</taxon>
        <taxon>Eupodiscales</taxon>
        <taxon>Parodontellaceae</taxon>
        <taxon>Trieres</taxon>
    </lineage>
</organism>
<proteinExistence type="inferred from homology"/>
<evidence type="ECO:0000305" key="1"/>
<reference key="1">
    <citation type="journal article" date="1995" name="Plant Mol. Biol. Rep.">
        <title>The chloroplast genome of a chlorophyll a+c-containing alga, Odontella sinensis.</title>
        <authorList>
            <person name="Kowallik K.V."/>
            <person name="Stoebe B."/>
            <person name="Schaffran I."/>
            <person name="Kroth-Pancic P."/>
            <person name="Freier U."/>
        </authorList>
    </citation>
    <scope>NUCLEOTIDE SEQUENCE [LARGE SCALE GENOMIC DNA]</scope>
</reference>
<sequence>MTKISTAKTFFINGQEYYTTNTINLHDLLNYFDFNSSLLVLEYNNFICNKKNWEKIMISNNDKIEIVTIVGGG</sequence>
<geneLocation type="chloroplast"/>
<dbReference type="EMBL" id="Z67753">
    <property type="protein sequence ID" value="CAA91653.1"/>
    <property type="molecule type" value="Genomic_DNA"/>
</dbReference>
<dbReference type="PIR" id="S78280">
    <property type="entry name" value="S78280"/>
</dbReference>
<dbReference type="RefSeq" id="NP_043621.1">
    <property type="nucleotide sequence ID" value="NC_001713.1"/>
</dbReference>
<dbReference type="SMR" id="P49535"/>
<dbReference type="GeneID" id="801820"/>
<dbReference type="GO" id="GO:0009507">
    <property type="term" value="C:chloroplast"/>
    <property type="evidence" value="ECO:0007669"/>
    <property type="project" value="UniProtKB-SubCell"/>
</dbReference>
<dbReference type="CDD" id="cd00565">
    <property type="entry name" value="Ubl_ThiS"/>
    <property type="match status" value="1"/>
</dbReference>
<dbReference type="Gene3D" id="3.10.20.30">
    <property type="match status" value="1"/>
</dbReference>
<dbReference type="InterPro" id="IPR012675">
    <property type="entry name" value="Beta-grasp_dom_sf"/>
</dbReference>
<dbReference type="InterPro" id="IPR016155">
    <property type="entry name" value="Mopterin_synth/thiamin_S_b"/>
</dbReference>
<dbReference type="InterPro" id="IPR010035">
    <property type="entry name" value="Thi_S"/>
</dbReference>
<dbReference type="InterPro" id="IPR003749">
    <property type="entry name" value="ThiS/MoaD-like"/>
</dbReference>
<dbReference type="NCBIfam" id="TIGR01683">
    <property type="entry name" value="thiS"/>
    <property type="match status" value="1"/>
</dbReference>
<dbReference type="PANTHER" id="PTHR34472">
    <property type="entry name" value="SULFUR CARRIER PROTEIN THIS"/>
    <property type="match status" value="1"/>
</dbReference>
<dbReference type="PANTHER" id="PTHR34472:SF1">
    <property type="entry name" value="SULFUR CARRIER PROTEIN THIS"/>
    <property type="match status" value="1"/>
</dbReference>
<dbReference type="Pfam" id="PF02597">
    <property type="entry name" value="ThiS"/>
    <property type="match status" value="1"/>
</dbReference>
<dbReference type="SUPFAM" id="SSF54285">
    <property type="entry name" value="MoaD/ThiS"/>
    <property type="match status" value="1"/>
</dbReference>
<protein>
    <recommendedName>
        <fullName>Uncharacterized protein ycf40</fullName>
    </recommendedName>
</protein>
<name>YCF40_TRICV</name>